<accession>Q7VY73</accession>
<evidence type="ECO:0000255" key="1">
    <source>
        <dbReference type="HAMAP-Rule" id="MF_01033"/>
    </source>
</evidence>
<reference key="1">
    <citation type="journal article" date="2003" name="Nat. Genet.">
        <title>Comparative analysis of the genome sequences of Bordetella pertussis, Bordetella parapertussis and Bordetella bronchiseptica.</title>
        <authorList>
            <person name="Parkhill J."/>
            <person name="Sebaihia M."/>
            <person name="Preston A."/>
            <person name="Murphy L.D."/>
            <person name="Thomson N.R."/>
            <person name="Harris D.E."/>
            <person name="Holden M.T.G."/>
            <person name="Churcher C.M."/>
            <person name="Bentley S.D."/>
            <person name="Mungall K.L."/>
            <person name="Cerdeno-Tarraga A.-M."/>
            <person name="Temple L."/>
            <person name="James K.D."/>
            <person name="Harris B."/>
            <person name="Quail M.A."/>
            <person name="Achtman M."/>
            <person name="Atkin R."/>
            <person name="Baker S."/>
            <person name="Basham D."/>
            <person name="Bason N."/>
            <person name="Cherevach I."/>
            <person name="Chillingworth T."/>
            <person name="Collins M."/>
            <person name="Cronin A."/>
            <person name="Davis P."/>
            <person name="Doggett J."/>
            <person name="Feltwell T."/>
            <person name="Goble A."/>
            <person name="Hamlin N."/>
            <person name="Hauser H."/>
            <person name="Holroyd S."/>
            <person name="Jagels K."/>
            <person name="Leather S."/>
            <person name="Moule S."/>
            <person name="Norberczak H."/>
            <person name="O'Neil S."/>
            <person name="Ormond D."/>
            <person name="Price C."/>
            <person name="Rabbinowitsch E."/>
            <person name="Rutter S."/>
            <person name="Sanders M."/>
            <person name="Saunders D."/>
            <person name="Seeger K."/>
            <person name="Sharp S."/>
            <person name="Simmonds M."/>
            <person name="Skelton J."/>
            <person name="Squares R."/>
            <person name="Squares S."/>
            <person name="Stevens K."/>
            <person name="Unwin L."/>
            <person name="Whitehead S."/>
            <person name="Barrell B.G."/>
            <person name="Maskell D.J."/>
        </authorList>
    </citation>
    <scope>NUCLEOTIDE SEQUENCE [LARGE SCALE GENOMIC DNA]</scope>
    <source>
        <strain>Tohama I / ATCC BAA-589 / NCTC 13251</strain>
    </source>
</reference>
<proteinExistence type="inferred from homology"/>
<keyword id="KW-0028">Amino-acid biosynthesis</keyword>
<keyword id="KW-0100">Branched-chain amino acid biosynthesis</keyword>
<keyword id="KW-0963">Cytoplasm</keyword>
<keyword id="KW-0432">Leucine biosynthesis</keyword>
<keyword id="KW-0460">Magnesium</keyword>
<keyword id="KW-0464">Manganese</keyword>
<keyword id="KW-0479">Metal-binding</keyword>
<keyword id="KW-0520">NAD</keyword>
<keyword id="KW-0560">Oxidoreductase</keyword>
<keyword id="KW-1185">Reference proteome</keyword>
<dbReference type="EC" id="1.1.1.85" evidence="1"/>
<dbReference type="EMBL" id="BX640415">
    <property type="protein sequence ID" value="CAE41772.1"/>
    <property type="molecule type" value="Genomic_DNA"/>
</dbReference>
<dbReference type="RefSeq" id="NP_880220.1">
    <property type="nucleotide sequence ID" value="NC_002929.2"/>
</dbReference>
<dbReference type="RefSeq" id="WP_010930381.1">
    <property type="nucleotide sequence ID" value="NZ_CP039022.1"/>
</dbReference>
<dbReference type="SMR" id="Q7VY73"/>
<dbReference type="STRING" id="257313.BP1483"/>
<dbReference type="PaxDb" id="257313-BP1483"/>
<dbReference type="GeneID" id="69601397"/>
<dbReference type="KEGG" id="bpe:BP1483"/>
<dbReference type="PATRIC" id="fig|257313.5.peg.1591"/>
<dbReference type="eggNOG" id="COG0473">
    <property type="taxonomic scope" value="Bacteria"/>
</dbReference>
<dbReference type="HOGENOM" id="CLU_031953_0_3_4"/>
<dbReference type="UniPathway" id="UPA00048">
    <property type="reaction ID" value="UER00072"/>
</dbReference>
<dbReference type="Proteomes" id="UP000002676">
    <property type="component" value="Chromosome"/>
</dbReference>
<dbReference type="GO" id="GO:0005829">
    <property type="term" value="C:cytosol"/>
    <property type="evidence" value="ECO:0007669"/>
    <property type="project" value="TreeGrafter"/>
</dbReference>
<dbReference type="GO" id="GO:0003862">
    <property type="term" value="F:3-isopropylmalate dehydrogenase activity"/>
    <property type="evidence" value="ECO:0007669"/>
    <property type="project" value="UniProtKB-UniRule"/>
</dbReference>
<dbReference type="GO" id="GO:0000287">
    <property type="term" value="F:magnesium ion binding"/>
    <property type="evidence" value="ECO:0007669"/>
    <property type="project" value="InterPro"/>
</dbReference>
<dbReference type="GO" id="GO:0051287">
    <property type="term" value="F:NAD binding"/>
    <property type="evidence" value="ECO:0007669"/>
    <property type="project" value="InterPro"/>
</dbReference>
<dbReference type="GO" id="GO:0009098">
    <property type="term" value="P:L-leucine biosynthetic process"/>
    <property type="evidence" value="ECO:0007669"/>
    <property type="project" value="UniProtKB-UniRule"/>
</dbReference>
<dbReference type="FunFam" id="3.40.718.10:FF:000028">
    <property type="entry name" value="3-isopropylmalate dehydrogenase"/>
    <property type="match status" value="1"/>
</dbReference>
<dbReference type="Gene3D" id="3.40.718.10">
    <property type="entry name" value="Isopropylmalate Dehydrogenase"/>
    <property type="match status" value="1"/>
</dbReference>
<dbReference type="HAMAP" id="MF_01033">
    <property type="entry name" value="LeuB_type1"/>
    <property type="match status" value="1"/>
</dbReference>
<dbReference type="InterPro" id="IPR019818">
    <property type="entry name" value="IsoCit/isopropylmalate_DH_CS"/>
</dbReference>
<dbReference type="InterPro" id="IPR024084">
    <property type="entry name" value="IsoPropMal-DH-like_dom"/>
</dbReference>
<dbReference type="InterPro" id="IPR004429">
    <property type="entry name" value="Isopropylmalate_DH"/>
</dbReference>
<dbReference type="NCBIfam" id="TIGR00169">
    <property type="entry name" value="leuB"/>
    <property type="match status" value="1"/>
</dbReference>
<dbReference type="PANTHER" id="PTHR42979">
    <property type="entry name" value="3-ISOPROPYLMALATE DEHYDROGENASE"/>
    <property type="match status" value="1"/>
</dbReference>
<dbReference type="PANTHER" id="PTHR42979:SF1">
    <property type="entry name" value="3-ISOPROPYLMALATE DEHYDROGENASE"/>
    <property type="match status" value="1"/>
</dbReference>
<dbReference type="Pfam" id="PF00180">
    <property type="entry name" value="Iso_dh"/>
    <property type="match status" value="1"/>
</dbReference>
<dbReference type="SMART" id="SM01329">
    <property type="entry name" value="Iso_dh"/>
    <property type="match status" value="1"/>
</dbReference>
<dbReference type="SUPFAM" id="SSF53659">
    <property type="entry name" value="Isocitrate/Isopropylmalate dehydrogenase-like"/>
    <property type="match status" value="1"/>
</dbReference>
<dbReference type="PROSITE" id="PS00470">
    <property type="entry name" value="IDH_IMDH"/>
    <property type="match status" value="1"/>
</dbReference>
<feature type="chain" id="PRO_0000083651" description="3-isopropylmalate dehydrogenase">
    <location>
        <begin position="1"/>
        <end position="358"/>
    </location>
</feature>
<feature type="binding site" evidence="1">
    <location>
        <position position="92"/>
    </location>
    <ligand>
        <name>substrate</name>
    </ligand>
</feature>
<feature type="binding site" evidence="1">
    <location>
        <position position="102"/>
    </location>
    <ligand>
        <name>substrate</name>
    </ligand>
</feature>
<feature type="binding site" evidence="1">
    <location>
        <position position="130"/>
    </location>
    <ligand>
        <name>substrate</name>
    </ligand>
</feature>
<feature type="binding site" evidence="1">
    <location>
        <position position="224"/>
    </location>
    <ligand>
        <name>Mg(2+)</name>
        <dbReference type="ChEBI" id="CHEBI:18420"/>
    </ligand>
</feature>
<feature type="binding site" evidence="1">
    <location>
        <position position="224"/>
    </location>
    <ligand>
        <name>substrate</name>
    </ligand>
</feature>
<feature type="binding site" evidence="1">
    <location>
        <position position="248"/>
    </location>
    <ligand>
        <name>Mg(2+)</name>
        <dbReference type="ChEBI" id="CHEBI:18420"/>
    </ligand>
</feature>
<feature type="binding site" evidence="1">
    <location>
        <position position="252"/>
    </location>
    <ligand>
        <name>Mg(2+)</name>
        <dbReference type="ChEBI" id="CHEBI:18420"/>
    </ligand>
</feature>
<feature type="binding site" evidence="1">
    <location>
        <begin position="282"/>
        <end position="294"/>
    </location>
    <ligand>
        <name>NAD(+)</name>
        <dbReference type="ChEBI" id="CHEBI:57540"/>
    </ligand>
</feature>
<feature type="site" description="Important for catalysis" evidence="1">
    <location>
        <position position="137"/>
    </location>
</feature>
<feature type="site" description="Important for catalysis" evidence="1">
    <location>
        <position position="192"/>
    </location>
</feature>
<name>LEU3_BORPE</name>
<protein>
    <recommendedName>
        <fullName evidence="1">3-isopropylmalate dehydrogenase</fullName>
        <ecNumber evidence="1">1.1.1.85</ecNumber>
    </recommendedName>
    <alternativeName>
        <fullName evidence="1">3-IPM-DH</fullName>
    </alternativeName>
    <alternativeName>
        <fullName evidence="1">Beta-IPM dehydrogenase</fullName>
        <shortName evidence="1">IMDH</shortName>
    </alternativeName>
</protein>
<comment type="function">
    <text evidence="1">Catalyzes the oxidation of 3-carboxy-2-hydroxy-4-methylpentanoate (3-isopropylmalate) to 3-carboxy-4-methyl-2-oxopentanoate. The product decarboxylates to 4-methyl-2 oxopentanoate.</text>
</comment>
<comment type="catalytic activity">
    <reaction evidence="1">
        <text>(2R,3S)-3-isopropylmalate + NAD(+) = 4-methyl-2-oxopentanoate + CO2 + NADH</text>
        <dbReference type="Rhea" id="RHEA:32271"/>
        <dbReference type="ChEBI" id="CHEBI:16526"/>
        <dbReference type="ChEBI" id="CHEBI:17865"/>
        <dbReference type="ChEBI" id="CHEBI:35121"/>
        <dbReference type="ChEBI" id="CHEBI:57540"/>
        <dbReference type="ChEBI" id="CHEBI:57945"/>
        <dbReference type="EC" id="1.1.1.85"/>
    </reaction>
</comment>
<comment type="cofactor">
    <cofactor evidence="1">
        <name>Mg(2+)</name>
        <dbReference type="ChEBI" id="CHEBI:18420"/>
    </cofactor>
    <cofactor evidence="1">
        <name>Mn(2+)</name>
        <dbReference type="ChEBI" id="CHEBI:29035"/>
    </cofactor>
    <text evidence="1">Binds 1 Mg(2+) or Mn(2+) ion per subunit.</text>
</comment>
<comment type="pathway">
    <text evidence="1">Amino-acid biosynthesis; L-leucine biosynthesis; L-leucine from 3-methyl-2-oxobutanoate: step 3/4.</text>
</comment>
<comment type="subunit">
    <text evidence="1">Homodimer.</text>
</comment>
<comment type="subcellular location">
    <subcellularLocation>
        <location evidence="1">Cytoplasm</location>
    </subcellularLocation>
</comment>
<comment type="similarity">
    <text evidence="1">Belongs to the isocitrate and isopropylmalate dehydrogenases family. LeuB type 1 subfamily.</text>
</comment>
<sequence>MTHQIAVLPGDGIGPEIVEQAERVLKALDLPLELRQAPVGGAAFDQFEHPLPPATLELAQGSHAVLFGAVGDWKYDTLPREFRPEQAILGLRKALGLFANLRPAILYPELASASSLKPEIVSGLDILIIRELTGDIYFGTPRGVRTAADGAFAGEREGYDTMRYAESEVRRIARIGFESARKRNKKLCSVDKANVLETSQFWRDLVIEVSRDYLDVELSHMYVDNAAMQLVRNPRQFDVIVTGNLFGDILSDEAAMLTGSIGMLPSASLNAAGQGLYEPSHGSAPDIAGQGIANPLATILSAAMLLRYSLNLAPQADRVEAAVRKVLADGLRTADIHEAGTTKVSTSQMGDAVLKALG</sequence>
<organism>
    <name type="scientific">Bordetella pertussis (strain Tohama I / ATCC BAA-589 / NCTC 13251)</name>
    <dbReference type="NCBI Taxonomy" id="257313"/>
    <lineage>
        <taxon>Bacteria</taxon>
        <taxon>Pseudomonadati</taxon>
        <taxon>Pseudomonadota</taxon>
        <taxon>Betaproteobacteria</taxon>
        <taxon>Burkholderiales</taxon>
        <taxon>Alcaligenaceae</taxon>
        <taxon>Bordetella</taxon>
    </lineage>
</organism>
<gene>
    <name evidence="1" type="primary">leuB</name>
    <name type="ordered locus">BP1483</name>
</gene>